<accession>P0A605</accession>
<accession>A0A1R3XWI8</accession>
<accession>O53635</accession>
<accession>X2BE22</accession>
<proteinExistence type="inferred from homology"/>
<protein>
    <recommendedName>
        <fullName evidence="1">Phosphoheptose isomerase</fullName>
        <ecNumber evidence="1">5.3.1.28</ecNumber>
    </recommendedName>
    <alternativeName>
        <fullName evidence="1">Sedoheptulose 7-phosphate isomerase</fullName>
    </alternativeName>
</protein>
<reference key="1">
    <citation type="journal article" date="2003" name="Proc. Natl. Acad. Sci. U.S.A.">
        <title>The complete genome sequence of Mycobacterium bovis.</title>
        <authorList>
            <person name="Garnier T."/>
            <person name="Eiglmeier K."/>
            <person name="Camus J.-C."/>
            <person name="Medina N."/>
            <person name="Mansoor H."/>
            <person name="Pryor M."/>
            <person name="Duthoy S."/>
            <person name="Grondin S."/>
            <person name="Lacroix C."/>
            <person name="Monsempe C."/>
            <person name="Simon S."/>
            <person name="Harris B."/>
            <person name="Atkin R."/>
            <person name="Doggett J."/>
            <person name="Mayes R."/>
            <person name="Keating L."/>
            <person name="Wheeler P.R."/>
            <person name="Parkhill J."/>
            <person name="Barrell B.G."/>
            <person name="Cole S.T."/>
            <person name="Gordon S.V."/>
            <person name="Hewinson R.G."/>
        </authorList>
    </citation>
    <scope>NUCLEOTIDE SEQUENCE [LARGE SCALE GENOMIC DNA]</scope>
    <source>
        <strain>ATCC BAA-935 / AF2122/97</strain>
    </source>
</reference>
<reference key="2">
    <citation type="journal article" date="2017" name="Genome Announc.">
        <title>Updated reference genome sequence and annotation of Mycobacterium bovis AF2122/97.</title>
        <authorList>
            <person name="Malone K.M."/>
            <person name="Farrell D."/>
            <person name="Stuber T.P."/>
            <person name="Schubert O.T."/>
            <person name="Aebersold R."/>
            <person name="Robbe-Austerman S."/>
            <person name="Gordon S.V."/>
        </authorList>
    </citation>
    <scope>NUCLEOTIDE SEQUENCE [LARGE SCALE GENOMIC DNA]</scope>
    <scope>GENOME REANNOTATION</scope>
    <source>
        <strain>ATCC BAA-935 / AF2122/97</strain>
    </source>
</reference>
<evidence type="ECO:0000255" key="1">
    <source>
        <dbReference type="HAMAP-Rule" id="MF_00067"/>
    </source>
</evidence>
<keyword id="KW-0119">Carbohydrate metabolism</keyword>
<keyword id="KW-0963">Cytoplasm</keyword>
<keyword id="KW-0413">Isomerase</keyword>
<keyword id="KW-0479">Metal-binding</keyword>
<keyword id="KW-1185">Reference proteome</keyword>
<keyword id="KW-0862">Zinc</keyword>
<name>GMHA_MYCBO</name>
<sequence length="196" mass="20923">MCTARTAEEIFVETIAVKTRILNDRVLLEAARAIGDRLIAGYRAGARVFMCGNGGSAADAQHFAAELTGHLIFDRPPLGAEALHANSSHLTAVANDYDYDTVFARALEGSARPGDTLFAISTSGNSMSVLRAAKTARELGVTVVAMTGESGGQLAEFADFLINVPSRDTGRIQESHIVFIHAISEHVEHALFAPRQ</sequence>
<dbReference type="EC" id="5.3.1.28" evidence="1"/>
<dbReference type="EMBL" id="LT708304">
    <property type="protein sequence ID" value="SIT98523.1"/>
    <property type="molecule type" value="Genomic_DNA"/>
</dbReference>
<dbReference type="RefSeq" id="NP_853784.1">
    <property type="nucleotide sequence ID" value="NC_002945.3"/>
</dbReference>
<dbReference type="RefSeq" id="WP_003400839.1">
    <property type="nucleotide sequence ID" value="NC_002945.4"/>
</dbReference>
<dbReference type="SMR" id="P0A605"/>
<dbReference type="PATRIC" id="fig|233413.5.peg.129"/>
<dbReference type="UniPathway" id="UPA00041">
    <property type="reaction ID" value="UER00436"/>
</dbReference>
<dbReference type="Proteomes" id="UP000001419">
    <property type="component" value="Chromosome"/>
</dbReference>
<dbReference type="GO" id="GO:0005737">
    <property type="term" value="C:cytoplasm"/>
    <property type="evidence" value="ECO:0007669"/>
    <property type="project" value="UniProtKB-SubCell"/>
</dbReference>
<dbReference type="GO" id="GO:0097367">
    <property type="term" value="F:carbohydrate derivative binding"/>
    <property type="evidence" value="ECO:0007669"/>
    <property type="project" value="InterPro"/>
</dbReference>
<dbReference type="GO" id="GO:0008968">
    <property type="term" value="F:D-sedoheptulose 7-phosphate isomerase activity"/>
    <property type="evidence" value="ECO:0007669"/>
    <property type="project" value="UniProtKB-UniRule"/>
</dbReference>
<dbReference type="GO" id="GO:0008270">
    <property type="term" value="F:zinc ion binding"/>
    <property type="evidence" value="ECO:0007669"/>
    <property type="project" value="UniProtKB-UniRule"/>
</dbReference>
<dbReference type="GO" id="GO:0005975">
    <property type="term" value="P:carbohydrate metabolic process"/>
    <property type="evidence" value="ECO:0007669"/>
    <property type="project" value="UniProtKB-UniRule"/>
</dbReference>
<dbReference type="GO" id="GO:2001061">
    <property type="term" value="P:D-glycero-D-manno-heptose 7-phosphate biosynthetic process"/>
    <property type="evidence" value="ECO:0007669"/>
    <property type="project" value="UniProtKB-UniPathway"/>
</dbReference>
<dbReference type="CDD" id="cd05006">
    <property type="entry name" value="SIS_GmhA"/>
    <property type="match status" value="1"/>
</dbReference>
<dbReference type="Gene3D" id="3.40.50.10490">
    <property type="entry name" value="Glucose-6-phosphate isomerase like protein, domain 1"/>
    <property type="match status" value="1"/>
</dbReference>
<dbReference type="HAMAP" id="MF_00067">
    <property type="entry name" value="GmhA"/>
    <property type="match status" value="1"/>
</dbReference>
<dbReference type="InterPro" id="IPR035461">
    <property type="entry name" value="GmhA/DiaA"/>
</dbReference>
<dbReference type="InterPro" id="IPR004515">
    <property type="entry name" value="Phosphoheptose_Isoase"/>
</dbReference>
<dbReference type="InterPro" id="IPR001347">
    <property type="entry name" value="SIS_dom"/>
</dbReference>
<dbReference type="InterPro" id="IPR046348">
    <property type="entry name" value="SIS_dom_sf"/>
</dbReference>
<dbReference type="InterPro" id="IPR050099">
    <property type="entry name" value="SIS_GmhA/DiaA_subfam"/>
</dbReference>
<dbReference type="NCBIfam" id="NF010547">
    <property type="entry name" value="PRK13938.1"/>
    <property type="match status" value="1"/>
</dbReference>
<dbReference type="PANTHER" id="PTHR30390:SF6">
    <property type="entry name" value="DNAA INITIATOR-ASSOCIATING PROTEIN DIAA"/>
    <property type="match status" value="1"/>
</dbReference>
<dbReference type="PANTHER" id="PTHR30390">
    <property type="entry name" value="SEDOHEPTULOSE 7-PHOSPHATE ISOMERASE / DNAA INITIATOR-ASSOCIATING FACTOR FOR REPLICATION INITIATION"/>
    <property type="match status" value="1"/>
</dbReference>
<dbReference type="Pfam" id="PF13580">
    <property type="entry name" value="SIS_2"/>
    <property type="match status" value="1"/>
</dbReference>
<dbReference type="SUPFAM" id="SSF53697">
    <property type="entry name" value="SIS domain"/>
    <property type="match status" value="1"/>
</dbReference>
<dbReference type="PROSITE" id="PS51464">
    <property type="entry name" value="SIS"/>
    <property type="match status" value="1"/>
</dbReference>
<comment type="function">
    <text evidence="1">Catalyzes the isomerization of sedoheptulose 7-phosphate in D-glycero-D-manno-heptose 7-phosphate.</text>
</comment>
<comment type="catalytic activity">
    <reaction evidence="1">
        <text>2 D-sedoheptulose 7-phosphate = D-glycero-alpha-D-manno-heptose 7-phosphate + D-glycero-beta-D-manno-heptose 7-phosphate</text>
        <dbReference type="Rhea" id="RHEA:27489"/>
        <dbReference type="ChEBI" id="CHEBI:57483"/>
        <dbReference type="ChEBI" id="CHEBI:60203"/>
        <dbReference type="ChEBI" id="CHEBI:60204"/>
        <dbReference type="EC" id="5.3.1.28"/>
    </reaction>
</comment>
<comment type="cofactor">
    <cofactor evidence="1">
        <name>Zn(2+)</name>
        <dbReference type="ChEBI" id="CHEBI:29105"/>
    </cofactor>
    <text evidence="1">Binds 1 zinc ion per subunit.</text>
</comment>
<comment type="pathway">
    <text evidence="1">Carbohydrate biosynthesis; D-glycero-D-manno-heptose 7-phosphate biosynthesis; D-glycero-alpha-D-manno-heptose 7-phosphate and D-glycero-beta-D-manno-heptose 7-phosphate from sedoheptulose 7-phosphate: step 1/1.</text>
</comment>
<comment type="subcellular location">
    <subcellularLocation>
        <location evidence="1">Cytoplasm</location>
    </subcellularLocation>
</comment>
<comment type="miscellaneous">
    <text evidence="1">The reaction produces a racemic mixture of D-glycero-alpha-D-manno-heptose 7-phosphate and D-glycero-beta-D-manno-heptose 7-phosphate.</text>
</comment>
<comment type="similarity">
    <text evidence="1">Belongs to the SIS family. GmhA subfamily.</text>
</comment>
<organism>
    <name type="scientific">Mycobacterium bovis (strain ATCC BAA-935 / AF2122/97)</name>
    <dbReference type="NCBI Taxonomy" id="233413"/>
    <lineage>
        <taxon>Bacteria</taxon>
        <taxon>Bacillati</taxon>
        <taxon>Actinomycetota</taxon>
        <taxon>Actinomycetes</taxon>
        <taxon>Mycobacteriales</taxon>
        <taxon>Mycobacteriaceae</taxon>
        <taxon>Mycobacterium</taxon>
        <taxon>Mycobacterium tuberculosis complex</taxon>
    </lineage>
</organism>
<gene>
    <name evidence="1" type="primary">gmhA</name>
    <name type="synonym">lpcA</name>
    <name type="ordered locus">BQ2027_MB0117</name>
</gene>
<feature type="chain" id="PRO_0000136537" description="Phosphoheptose isomerase">
    <location>
        <begin position="1"/>
        <end position="196"/>
    </location>
</feature>
<feature type="domain" description="SIS" evidence="1">
    <location>
        <begin position="38"/>
        <end position="196"/>
    </location>
</feature>
<feature type="binding site" evidence="1">
    <location>
        <begin position="53"/>
        <end position="55"/>
    </location>
    <ligand>
        <name>substrate</name>
    </ligand>
</feature>
<feature type="binding site" evidence="1">
    <location>
        <position position="62"/>
    </location>
    <ligand>
        <name>Zn(2+)</name>
        <dbReference type="ChEBI" id="CHEBI:29105"/>
    </ligand>
</feature>
<feature type="binding site" evidence="1">
    <location>
        <position position="66"/>
    </location>
    <ligand>
        <name>substrate</name>
    </ligand>
</feature>
<feature type="binding site" evidence="1">
    <location>
        <position position="66"/>
    </location>
    <ligand>
        <name>Zn(2+)</name>
        <dbReference type="ChEBI" id="CHEBI:29105"/>
    </ligand>
</feature>
<feature type="binding site" evidence="1">
    <location>
        <begin position="95"/>
        <end position="96"/>
    </location>
    <ligand>
        <name>substrate</name>
    </ligand>
</feature>
<feature type="binding site" evidence="1">
    <location>
        <begin position="121"/>
        <end position="123"/>
    </location>
    <ligand>
        <name>substrate</name>
    </ligand>
</feature>
<feature type="binding site" evidence="1">
    <location>
        <position position="126"/>
    </location>
    <ligand>
        <name>substrate</name>
    </ligand>
</feature>
<feature type="binding site" evidence="1">
    <location>
        <position position="173"/>
    </location>
    <ligand>
        <name>substrate</name>
    </ligand>
</feature>
<feature type="binding site" evidence="1">
    <location>
        <position position="173"/>
    </location>
    <ligand>
        <name>Zn(2+)</name>
        <dbReference type="ChEBI" id="CHEBI:29105"/>
    </ligand>
</feature>
<feature type="binding site" evidence="1">
    <location>
        <position position="181"/>
    </location>
    <ligand>
        <name>Zn(2+)</name>
        <dbReference type="ChEBI" id="CHEBI:29105"/>
    </ligand>
</feature>